<gene>
    <name type="primary">HBB</name>
</gene>
<sequence length="147" mass="16450">MVHWTAEEKQLITGLWGKVNVADCGAEALARLLIVYPWTQRFFASFGNLSSPTAILGNPMVRAHGKKVLTSFGDAVKNLDNIKNTFAQLSELHCDKLHVDPENFRLLGDILIIVLAAHFTKDFTPECQAAWQKLVRVVAHALARKYH</sequence>
<keyword id="KW-0002">3D-structure</keyword>
<keyword id="KW-0349">Heme</keyword>
<keyword id="KW-0408">Iron</keyword>
<keyword id="KW-0479">Metal-binding</keyword>
<keyword id="KW-0561">Oxygen transport</keyword>
<keyword id="KW-0813">Transport</keyword>
<proteinExistence type="evidence at protein level"/>
<accession>P02114</accession>
<name>HBB_ANAPL</name>
<feature type="initiator methionine" description="Removed">
    <location>
        <position position="1"/>
    </location>
</feature>
<feature type="chain" id="PRO_0000052868" description="Hemoglobin subunit beta">
    <location>
        <begin position="2"/>
        <end position="147"/>
    </location>
</feature>
<feature type="domain" description="Globin" evidence="1">
    <location>
        <begin position="3"/>
        <end position="147"/>
    </location>
</feature>
<feature type="binding site" description="distal binding residue">
    <location>
        <position position="64"/>
    </location>
    <ligand>
        <name>heme b</name>
        <dbReference type="ChEBI" id="CHEBI:60344"/>
    </ligand>
    <ligandPart>
        <name>Fe</name>
        <dbReference type="ChEBI" id="CHEBI:18248"/>
    </ligandPart>
</feature>
<feature type="binding site" description="proximal binding residue">
    <location>
        <position position="93"/>
    </location>
    <ligand>
        <name>heme b</name>
        <dbReference type="ChEBI" id="CHEBI:60344"/>
    </ligand>
    <ligandPart>
        <name>Fe</name>
        <dbReference type="ChEBI" id="CHEBI:18248"/>
    </ligandPart>
</feature>
<feature type="helix" evidence="2">
    <location>
        <begin position="6"/>
        <end position="18"/>
    </location>
</feature>
<feature type="helix" evidence="2">
    <location>
        <begin position="21"/>
        <end position="35"/>
    </location>
</feature>
<feature type="helix" evidence="2">
    <location>
        <begin position="37"/>
        <end position="46"/>
    </location>
</feature>
<feature type="helix" evidence="2">
    <location>
        <begin position="52"/>
        <end position="56"/>
    </location>
</feature>
<feature type="helix" evidence="2">
    <location>
        <begin position="59"/>
        <end position="77"/>
    </location>
</feature>
<feature type="helix" evidence="2">
    <location>
        <begin position="79"/>
        <end position="81"/>
    </location>
</feature>
<feature type="helix" evidence="2">
    <location>
        <begin position="82"/>
        <end position="85"/>
    </location>
</feature>
<feature type="helix" evidence="2">
    <location>
        <begin position="87"/>
        <end position="95"/>
    </location>
</feature>
<feature type="helix" evidence="2">
    <location>
        <begin position="102"/>
        <end position="119"/>
    </location>
</feature>
<feature type="helix" evidence="2">
    <location>
        <begin position="120"/>
        <end position="122"/>
    </location>
</feature>
<feature type="helix" evidence="2">
    <location>
        <begin position="125"/>
        <end position="142"/>
    </location>
</feature>
<feature type="helix" evidence="2">
    <location>
        <begin position="144"/>
        <end position="146"/>
    </location>
</feature>
<dbReference type="EMBL" id="J00926">
    <property type="status" value="NOT_ANNOTATED_CDS"/>
    <property type="molecule type" value="mRNA"/>
</dbReference>
<dbReference type="PIR" id="A02434">
    <property type="entry name" value="HBDK"/>
</dbReference>
<dbReference type="PDB" id="3EOK">
    <property type="method" value="X-ray"/>
    <property type="resolution" value="2.10 A"/>
    <property type="chains" value="B=2-147"/>
</dbReference>
<dbReference type="PDBsum" id="3EOK"/>
<dbReference type="SMR" id="P02114"/>
<dbReference type="OrthoDB" id="9886081at2759"/>
<dbReference type="EvolutionaryTrace" id="P02114"/>
<dbReference type="Proteomes" id="UP000694400">
    <property type="component" value="Unplaced"/>
</dbReference>
<dbReference type="GO" id="GO:0072562">
    <property type="term" value="C:blood microparticle"/>
    <property type="evidence" value="ECO:0007669"/>
    <property type="project" value="TreeGrafter"/>
</dbReference>
<dbReference type="GO" id="GO:0031838">
    <property type="term" value="C:haptoglobin-hemoglobin complex"/>
    <property type="evidence" value="ECO:0007669"/>
    <property type="project" value="TreeGrafter"/>
</dbReference>
<dbReference type="GO" id="GO:0005833">
    <property type="term" value="C:hemoglobin complex"/>
    <property type="evidence" value="ECO:0007669"/>
    <property type="project" value="InterPro"/>
</dbReference>
<dbReference type="GO" id="GO:0031720">
    <property type="term" value="F:haptoglobin binding"/>
    <property type="evidence" value="ECO:0007669"/>
    <property type="project" value="TreeGrafter"/>
</dbReference>
<dbReference type="GO" id="GO:0020037">
    <property type="term" value="F:heme binding"/>
    <property type="evidence" value="ECO:0007669"/>
    <property type="project" value="InterPro"/>
</dbReference>
<dbReference type="GO" id="GO:0046872">
    <property type="term" value="F:metal ion binding"/>
    <property type="evidence" value="ECO:0007669"/>
    <property type="project" value="UniProtKB-KW"/>
</dbReference>
<dbReference type="GO" id="GO:0043177">
    <property type="term" value="F:organic acid binding"/>
    <property type="evidence" value="ECO:0007669"/>
    <property type="project" value="TreeGrafter"/>
</dbReference>
<dbReference type="GO" id="GO:0019825">
    <property type="term" value="F:oxygen binding"/>
    <property type="evidence" value="ECO:0007669"/>
    <property type="project" value="InterPro"/>
</dbReference>
<dbReference type="GO" id="GO:0005344">
    <property type="term" value="F:oxygen carrier activity"/>
    <property type="evidence" value="ECO:0007669"/>
    <property type="project" value="UniProtKB-KW"/>
</dbReference>
<dbReference type="GO" id="GO:0004601">
    <property type="term" value="F:peroxidase activity"/>
    <property type="evidence" value="ECO:0007669"/>
    <property type="project" value="TreeGrafter"/>
</dbReference>
<dbReference type="GO" id="GO:0042744">
    <property type="term" value="P:hydrogen peroxide catabolic process"/>
    <property type="evidence" value="ECO:0007669"/>
    <property type="project" value="TreeGrafter"/>
</dbReference>
<dbReference type="CDD" id="cd08925">
    <property type="entry name" value="Hb-beta-like"/>
    <property type="match status" value="1"/>
</dbReference>
<dbReference type="FunFam" id="1.10.490.10:FF:000001">
    <property type="entry name" value="Hemoglobin subunit beta"/>
    <property type="match status" value="1"/>
</dbReference>
<dbReference type="Gene3D" id="1.10.490.10">
    <property type="entry name" value="Globins"/>
    <property type="match status" value="1"/>
</dbReference>
<dbReference type="InterPro" id="IPR000971">
    <property type="entry name" value="Globin"/>
</dbReference>
<dbReference type="InterPro" id="IPR009050">
    <property type="entry name" value="Globin-like_sf"/>
</dbReference>
<dbReference type="InterPro" id="IPR012292">
    <property type="entry name" value="Globin/Proto"/>
</dbReference>
<dbReference type="InterPro" id="IPR002337">
    <property type="entry name" value="Hemoglobin_b"/>
</dbReference>
<dbReference type="InterPro" id="IPR050056">
    <property type="entry name" value="Hemoglobin_oxygen_transport"/>
</dbReference>
<dbReference type="PANTHER" id="PTHR11442">
    <property type="entry name" value="HEMOGLOBIN FAMILY MEMBER"/>
    <property type="match status" value="1"/>
</dbReference>
<dbReference type="PANTHER" id="PTHR11442:SF7">
    <property type="entry name" value="HEMOGLOBIN SUBUNIT EPSILON"/>
    <property type="match status" value="1"/>
</dbReference>
<dbReference type="Pfam" id="PF00042">
    <property type="entry name" value="Globin"/>
    <property type="match status" value="1"/>
</dbReference>
<dbReference type="PRINTS" id="PR00814">
    <property type="entry name" value="BETAHAEM"/>
</dbReference>
<dbReference type="SUPFAM" id="SSF46458">
    <property type="entry name" value="Globin-like"/>
    <property type="match status" value="1"/>
</dbReference>
<dbReference type="PROSITE" id="PS01033">
    <property type="entry name" value="GLOBIN"/>
    <property type="match status" value="1"/>
</dbReference>
<evidence type="ECO:0000255" key="1">
    <source>
        <dbReference type="PROSITE-ProRule" id="PRU00238"/>
    </source>
</evidence>
<evidence type="ECO:0007829" key="2">
    <source>
        <dbReference type="PDB" id="3EOK"/>
    </source>
</evidence>
<reference key="1">
    <citation type="journal article" date="1981" name="Gene">
        <title>Nucleotide sequence analysis of a cloned duck beta-globin cDNA.</title>
        <authorList>
            <person name="Hampe A."/>
            <person name="Therwath A."/>
            <person name="Soriano P."/>
            <person name="Galibert F."/>
        </authorList>
    </citation>
    <scope>NUCLEOTIDE SEQUENCE [MRNA]</scope>
</reference>
<comment type="function">
    <text>Involved in oxygen transport from the lung to the various peripheral tissues.</text>
</comment>
<comment type="subunit">
    <text>Heterotetramer of two alpha chains and two beta chains.</text>
</comment>
<comment type="tissue specificity">
    <text>Red blood cells.</text>
</comment>
<comment type="similarity">
    <text evidence="1">Belongs to the globin family.</text>
</comment>
<organism>
    <name type="scientific">Anas platyrhynchos</name>
    <name type="common">Mallard</name>
    <name type="synonym">Anas boschas</name>
    <dbReference type="NCBI Taxonomy" id="8839"/>
    <lineage>
        <taxon>Eukaryota</taxon>
        <taxon>Metazoa</taxon>
        <taxon>Chordata</taxon>
        <taxon>Craniata</taxon>
        <taxon>Vertebrata</taxon>
        <taxon>Euteleostomi</taxon>
        <taxon>Archelosauria</taxon>
        <taxon>Archosauria</taxon>
        <taxon>Dinosauria</taxon>
        <taxon>Saurischia</taxon>
        <taxon>Theropoda</taxon>
        <taxon>Coelurosauria</taxon>
        <taxon>Aves</taxon>
        <taxon>Neognathae</taxon>
        <taxon>Galloanserae</taxon>
        <taxon>Anseriformes</taxon>
        <taxon>Anatidae</taxon>
        <taxon>Anatinae</taxon>
        <taxon>Anas</taxon>
    </lineage>
</organism>
<protein>
    <recommendedName>
        <fullName>Hemoglobin subunit beta</fullName>
    </recommendedName>
    <alternativeName>
        <fullName>Beta-globin</fullName>
    </alternativeName>
    <alternativeName>
        <fullName>Hemoglobin beta chain</fullName>
    </alternativeName>
</protein>